<gene>
    <name type="ORF">DDB_G0267768</name>
</gene>
<dbReference type="EMBL" id="AAFI02000003">
    <property type="protein sequence ID" value="EAL73337.1"/>
    <property type="molecule type" value="Genomic_DNA"/>
</dbReference>
<dbReference type="RefSeq" id="XP_647293.1">
    <property type="nucleotide sequence ID" value="XM_642201.1"/>
</dbReference>
<dbReference type="FunCoup" id="Q55G91">
    <property type="interactions" value="1072"/>
</dbReference>
<dbReference type="STRING" id="44689.Q55G91"/>
<dbReference type="PaxDb" id="44689-DDB0238598"/>
<dbReference type="EnsemblProtists" id="EAL73337">
    <property type="protein sequence ID" value="EAL73337"/>
    <property type="gene ID" value="DDB_G0267768"/>
</dbReference>
<dbReference type="GeneID" id="8616099"/>
<dbReference type="KEGG" id="ddi:DDB_G0267768"/>
<dbReference type="dictyBase" id="DDB_G0267768"/>
<dbReference type="VEuPathDB" id="AmoebaDB:DDB_G0267768"/>
<dbReference type="eggNOG" id="KOG2948">
    <property type="taxonomic scope" value="Eukaryota"/>
</dbReference>
<dbReference type="HOGENOM" id="CLU_051576_0_0_1"/>
<dbReference type="InParanoid" id="Q55G91"/>
<dbReference type="OMA" id="FHCDEVV"/>
<dbReference type="PhylomeDB" id="Q55G91"/>
<dbReference type="PRO" id="PR:Q55G91"/>
<dbReference type="Proteomes" id="UP000002195">
    <property type="component" value="Chromosome 1"/>
</dbReference>
<dbReference type="GO" id="GO:0005737">
    <property type="term" value="C:cytoplasm"/>
    <property type="evidence" value="ECO:0000318"/>
    <property type="project" value="GO_Central"/>
</dbReference>
<dbReference type="GO" id="GO:0005634">
    <property type="term" value="C:nucleus"/>
    <property type="evidence" value="ECO:0000318"/>
    <property type="project" value="GO_Central"/>
</dbReference>
<dbReference type="InterPro" id="IPR003226">
    <property type="entry name" value="MYG1_exonuclease"/>
</dbReference>
<dbReference type="PANTHER" id="PTHR11215">
    <property type="entry name" value="METAL DEPENDENT HYDROLASE - RELATED"/>
    <property type="match status" value="1"/>
</dbReference>
<dbReference type="PANTHER" id="PTHR11215:SF1">
    <property type="entry name" value="MYG1 EXONUCLEASE"/>
    <property type="match status" value="1"/>
</dbReference>
<dbReference type="Pfam" id="PF03690">
    <property type="entry name" value="MYG1_exonuc"/>
    <property type="match status" value="1"/>
</dbReference>
<feature type="chain" id="PRO_0000328570" description="MYG1 protein">
    <location>
        <begin position="1"/>
        <end position="329"/>
    </location>
</feature>
<sequence>MSDLTICTHSGSFHADEALACYLLKLLPTYKDSKIIRSRDKSVIEKSTVAVDVGAVYNFEKLRFDHHQSGFTETFDDKHDIKLSSAGLIYKHYGKDIIKQRLDTNDSITELLYQKLYDSMIQELDGVDNGVERYPSDIKPRYQSGSSISARVGHLNQGWNEPQDDEIVNKQFEKAMELMGQYFLDRLDYYGKSWLPCRSIVENALENRKQTHSSGEILILDMFCPWKDHLFSLEQEKDIKTPIKFVLFEDTSGQWRVSAVGINLHSFTLRLPLPEEWRGKRDEELSQISGIEGCVFAHANGFIGGNKTREGALLMAIKTLNQSPKTLLE</sequence>
<comment type="similarity">
    <text evidence="1">Belongs to the MYG1 family.</text>
</comment>
<proteinExistence type="inferred from homology"/>
<accession>Q55G91</accession>
<organism>
    <name type="scientific">Dictyostelium discoideum</name>
    <name type="common">Social amoeba</name>
    <dbReference type="NCBI Taxonomy" id="44689"/>
    <lineage>
        <taxon>Eukaryota</taxon>
        <taxon>Amoebozoa</taxon>
        <taxon>Evosea</taxon>
        <taxon>Eumycetozoa</taxon>
        <taxon>Dictyostelia</taxon>
        <taxon>Dictyosteliales</taxon>
        <taxon>Dictyosteliaceae</taxon>
        <taxon>Dictyostelium</taxon>
    </lineage>
</organism>
<protein>
    <recommendedName>
        <fullName>MYG1 protein</fullName>
    </recommendedName>
</protein>
<name>U160_DICDI</name>
<evidence type="ECO:0000305" key="1"/>
<reference key="1">
    <citation type="journal article" date="2005" name="Nature">
        <title>The genome of the social amoeba Dictyostelium discoideum.</title>
        <authorList>
            <person name="Eichinger L."/>
            <person name="Pachebat J.A."/>
            <person name="Gloeckner G."/>
            <person name="Rajandream M.A."/>
            <person name="Sucgang R."/>
            <person name="Berriman M."/>
            <person name="Song J."/>
            <person name="Olsen R."/>
            <person name="Szafranski K."/>
            <person name="Xu Q."/>
            <person name="Tunggal B."/>
            <person name="Kummerfeld S."/>
            <person name="Madera M."/>
            <person name="Konfortov B.A."/>
            <person name="Rivero F."/>
            <person name="Bankier A.T."/>
            <person name="Lehmann R."/>
            <person name="Hamlin N."/>
            <person name="Davies R."/>
            <person name="Gaudet P."/>
            <person name="Fey P."/>
            <person name="Pilcher K."/>
            <person name="Chen G."/>
            <person name="Saunders D."/>
            <person name="Sodergren E.J."/>
            <person name="Davis P."/>
            <person name="Kerhornou A."/>
            <person name="Nie X."/>
            <person name="Hall N."/>
            <person name="Anjard C."/>
            <person name="Hemphill L."/>
            <person name="Bason N."/>
            <person name="Farbrother P."/>
            <person name="Desany B."/>
            <person name="Just E."/>
            <person name="Morio T."/>
            <person name="Rost R."/>
            <person name="Churcher C.M."/>
            <person name="Cooper J."/>
            <person name="Haydock S."/>
            <person name="van Driessche N."/>
            <person name="Cronin A."/>
            <person name="Goodhead I."/>
            <person name="Muzny D.M."/>
            <person name="Mourier T."/>
            <person name="Pain A."/>
            <person name="Lu M."/>
            <person name="Harper D."/>
            <person name="Lindsay R."/>
            <person name="Hauser H."/>
            <person name="James K.D."/>
            <person name="Quiles M."/>
            <person name="Madan Babu M."/>
            <person name="Saito T."/>
            <person name="Buchrieser C."/>
            <person name="Wardroper A."/>
            <person name="Felder M."/>
            <person name="Thangavelu M."/>
            <person name="Johnson D."/>
            <person name="Knights A."/>
            <person name="Loulseged H."/>
            <person name="Mungall K.L."/>
            <person name="Oliver K."/>
            <person name="Price C."/>
            <person name="Quail M.A."/>
            <person name="Urushihara H."/>
            <person name="Hernandez J."/>
            <person name="Rabbinowitsch E."/>
            <person name="Steffen D."/>
            <person name="Sanders M."/>
            <person name="Ma J."/>
            <person name="Kohara Y."/>
            <person name="Sharp S."/>
            <person name="Simmonds M.N."/>
            <person name="Spiegler S."/>
            <person name="Tivey A."/>
            <person name="Sugano S."/>
            <person name="White B."/>
            <person name="Walker D."/>
            <person name="Woodward J.R."/>
            <person name="Winckler T."/>
            <person name="Tanaka Y."/>
            <person name="Shaulsky G."/>
            <person name="Schleicher M."/>
            <person name="Weinstock G.M."/>
            <person name="Rosenthal A."/>
            <person name="Cox E.C."/>
            <person name="Chisholm R.L."/>
            <person name="Gibbs R.A."/>
            <person name="Loomis W.F."/>
            <person name="Platzer M."/>
            <person name="Kay R.R."/>
            <person name="Williams J.G."/>
            <person name="Dear P.H."/>
            <person name="Noegel A.A."/>
            <person name="Barrell B.G."/>
            <person name="Kuspa A."/>
        </authorList>
    </citation>
    <scope>NUCLEOTIDE SEQUENCE [LARGE SCALE GENOMIC DNA]</scope>
    <source>
        <strain>AX4</strain>
    </source>
</reference>
<keyword id="KW-1185">Reference proteome</keyword>